<proteinExistence type="evidence at protein level"/>
<name>PSAK_SPIOL</name>
<gene>
    <name type="primary">PSAK</name>
</gene>
<keyword id="KW-0150">Chloroplast</keyword>
<keyword id="KW-0903">Direct protein sequencing</keyword>
<keyword id="KW-0472">Membrane</keyword>
<keyword id="KW-0602">Photosynthesis</keyword>
<keyword id="KW-0603">Photosystem I</keyword>
<keyword id="KW-0934">Plastid</keyword>
<keyword id="KW-1185">Reference proteome</keyword>
<keyword id="KW-0793">Thylakoid</keyword>
<keyword id="KW-0812">Transmembrane</keyword>
<keyword id="KW-1133">Transmembrane helix</keyword>
<sequence>GDFIGSSTNLIMVTSTTLMLFAGRFGLXP</sequence>
<comment type="subcellular location">
    <subcellularLocation>
        <location evidence="2">Plastid</location>
        <location evidence="2">Chloroplast thylakoid membrane</location>
        <topology evidence="2">Multi-pass membrane protein</topology>
    </subcellularLocation>
</comment>
<comment type="similarity">
    <text evidence="2">Belongs to the PsaG/PsaK family.</text>
</comment>
<dbReference type="PIR" id="S07055">
    <property type="entry name" value="S07055"/>
</dbReference>
<dbReference type="PIR" id="S09734">
    <property type="entry name" value="S09734"/>
</dbReference>
<dbReference type="Proteomes" id="UP001155700">
    <property type="component" value="Unplaced"/>
</dbReference>
<dbReference type="GO" id="GO:0009535">
    <property type="term" value="C:chloroplast thylakoid membrane"/>
    <property type="evidence" value="ECO:0007669"/>
    <property type="project" value="UniProtKB-SubCell"/>
</dbReference>
<dbReference type="GO" id="GO:0009522">
    <property type="term" value="C:photosystem I"/>
    <property type="evidence" value="ECO:0007669"/>
    <property type="project" value="UniProtKB-KW"/>
</dbReference>
<dbReference type="GO" id="GO:0015979">
    <property type="term" value="P:photosynthesis"/>
    <property type="evidence" value="ECO:0007669"/>
    <property type="project" value="UniProtKB-KW"/>
</dbReference>
<dbReference type="Gene3D" id="1.10.286.40">
    <property type="entry name" value="Chlorophyll a-b binding protein like"/>
    <property type="match status" value="1"/>
</dbReference>
<dbReference type="InterPro" id="IPR023618">
    <property type="entry name" value="PSI_PsaG/PsaK_dom"/>
</dbReference>
<organism>
    <name type="scientific">Spinacia oleracea</name>
    <name type="common">Spinach</name>
    <dbReference type="NCBI Taxonomy" id="3562"/>
    <lineage>
        <taxon>Eukaryota</taxon>
        <taxon>Viridiplantae</taxon>
        <taxon>Streptophyta</taxon>
        <taxon>Embryophyta</taxon>
        <taxon>Tracheophyta</taxon>
        <taxon>Spermatophyta</taxon>
        <taxon>Magnoliopsida</taxon>
        <taxon>eudicotyledons</taxon>
        <taxon>Gunneridae</taxon>
        <taxon>Pentapetalae</taxon>
        <taxon>Caryophyllales</taxon>
        <taxon>Chenopodiaceae</taxon>
        <taxon>Chenopodioideae</taxon>
        <taxon>Anserineae</taxon>
        <taxon>Spinacia</taxon>
    </lineage>
</organism>
<protein>
    <recommendedName>
        <fullName>Photosystem I reaction center subunit psaK, chloroplastic</fullName>
    </recommendedName>
    <alternativeName>
        <fullName>Light-harvesting 5 kDa protein</fullName>
    </alternativeName>
    <alternativeName>
        <fullName>PSI-K</fullName>
    </alternativeName>
    <alternativeName>
        <fullName>Photosystem I subunit X</fullName>
    </alternativeName>
</protein>
<reference key="1">
    <citation type="journal article" date="1989" name="FEBS Lett.">
        <title>Characterization and N-terminal sequence of a 5 kDa polypeptide in the photosystem I core complex from spinach.</title>
        <authorList>
            <person name="Hoshina S."/>
            <person name="Sue S."/>
            <person name="Kunishima N."/>
            <person name="Kamide K."/>
            <person name="Wada K."/>
            <person name="Itoh S."/>
        </authorList>
    </citation>
    <scope>PROTEIN SEQUENCE</scope>
</reference>
<reference key="2">
    <citation type="journal article" date="1990" name="FEBS Lett.">
        <title>Polypeptide composition of higher plant photosystem I complex. Identification of psaI, psaJ and psaK gene products.</title>
        <authorList>
            <person name="Ikeuchi M."/>
            <person name="Hirano A."/>
            <person name="Hiyama T."/>
            <person name="Inoue Y."/>
        </authorList>
    </citation>
    <scope>PROTEIN SEQUENCE OF 1-27</scope>
</reference>
<reference key="3">
    <citation type="journal article" date="1990" name="FEBS Lett.">
        <title>The photosystem I 5.5 kDa subunit (the psaK gene product). An intrinsic subunit of the PSI reaction center complex.</title>
        <authorList>
            <person name="Wynn R.M."/>
            <person name="Malkin R."/>
        </authorList>
    </citation>
    <scope>PROTEIN SEQUENCE OF 1-10</scope>
</reference>
<accession>P14627</accession>
<feature type="chain" id="PRO_0000206211" description="Photosystem I reaction center subunit psaK, chloroplastic">
    <location>
        <begin position="1"/>
        <end position="29" status="greater than"/>
    </location>
</feature>
<feature type="transmembrane region" description="Helical" evidence="1">
    <location>
        <begin position="3"/>
        <end position="23"/>
    </location>
</feature>
<feature type="non-terminal residue">
    <location>
        <position position="29"/>
    </location>
</feature>
<evidence type="ECO:0000255" key="1"/>
<evidence type="ECO:0000305" key="2"/>